<gene>
    <name type="ordered locus">SAOUHSC_01054</name>
</gene>
<comment type="similarity">
    <text evidence="1">Belongs to the UPF0637 family.</text>
</comment>
<reference key="1">
    <citation type="book" date="2006" name="Gram positive pathogens, 2nd edition">
        <title>The Staphylococcus aureus NCTC 8325 genome.</title>
        <editorList>
            <person name="Fischetti V."/>
            <person name="Novick R."/>
            <person name="Ferretti J."/>
            <person name="Portnoy D."/>
            <person name="Rood J."/>
        </editorList>
        <authorList>
            <person name="Gillaspy A.F."/>
            <person name="Worrell V."/>
            <person name="Orvis J."/>
            <person name="Roe B.A."/>
            <person name="Dyer D.W."/>
            <person name="Iandolo J.J."/>
        </authorList>
    </citation>
    <scope>NUCLEOTIDE SEQUENCE [LARGE SCALE GENOMIC DNA]</scope>
    <source>
        <strain>NCTC 8325 / PS 47</strain>
    </source>
</reference>
<proteinExistence type="inferred from homology"/>
<feature type="chain" id="PRO_0000348329" description="UPF0637 protein SAOUHSC_01054">
    <location>
        <begin position="1"/>
        <end position="204"/>
    </location>
</feature>
<accession>Q2G2G7</accession>
<protein>
    <recommendedName>
        <fullName evidence="1">UPF0637 protein SAOUHSC_01054</fullName>
    </recommendedName>
</protein>
<name>Y1054_STAA8</name>
<organism>
    <name type="scientific">Staphylococcus aureus (strain NCTC 8325 / PS 47)</name>
    <dbReference type="NCBI Taxonomy" id="93061"/>
    <lineage>
        <taxon>Bacteria</taxon>
        <taxon>Bacillati</taxon>
        <taxon>Bacillota</taxon>
        <taxon>Bacilli</taxon>
        <taxon>Bacillales</taxon>
        <taxon>Staphylococcaceae</taxon>
        <taxon>Staphylococcus</taxon>
    </lineage>
</organism>
<evidence type="ECO:0000255" key="1">
    <source>
        <dbReference type="HAMAP-Rule" id="MF_01851"/>
    </source>
</evidence>
<keyword id="KW-1185">Reference proteome</keyword>
<sequence>MTKYTFKPKDFKAFNVEGLDARMEALNEYIRPQLRELGEYFSDFFTSQTGETFYPHVAKHARRSVNPPKDTWVAFATNKRGYKMLPHFQIGMFEDQLFVMFGIMHEAKDKATRAKVFERKFKAIQQLPDDYRVCLDHMKPDKPFIKDLTDDDLIEAIQRAINVKKGEFFIARAITPQDKRLKSDKAFIAFLEETFDQFLPFYSA</sequence>
<dbReference type="EMBL" id="CP000253">
    <property type="protein sequence ID" value="ABD30173.1"/>
    <property type="molecule type" value="Genomic_DNA"/>
</dbReference>
<dbReference type="RefSeq" id="WP_000170610.1">
    <property type="nucleotide sequence ID" value="NZ_LS483365.1"/>
</dbReference>
<dbReference type="RefSeq" id="YP_499602.1">
    <property type="nucleotide sequence ID" value="NC_007795.1"/>
</dbReference>
<dbReference type="SMR" id="Q2G2G7"/>
<dbReference type="STRING" id="93061.SAOUHSC_01054"/>
<dbReference type="PaxDb" id="1280-SAXN108_1103"/>
<dbReference type="GeneID" id="3921718"/>
<dbReference type="KEGG" id="sao:SAOUHSC_01054"/>
<dbReference type="PATRIC" id="fig|93061.5.peg.968"/>
<dbReference type="eggNOG" id="COG4493">
    <property type="taxonomic scope" value="Bacteria"/>
</dbReference>
<dbReference type="HOGENOM" id="CLU_096059_0_0_9"/>
<dbReference type="OrthoDB" id="9812818at2"/>
<dbReference type="PRO" id="PR:Q2G2G7"/>
<dbReference type="Proteomes" id="UP000008816">
    <property type="component" value="Chromosome"/>
</dbReference>
<dbReference type="Gene3D" id="3.30.930.20">
    <property type="entry name" value="Protein of unknown function DUF1054"/>
    <property type="match status" value="1"/>
</dbReference>
<dbReference type="HAMAP" id="MF_01851">
    <property type="entry name" value="UPF0637"/>
    <property type="match status" value="1"/>
</dbReference>
<dbReference type="InterPro" id="IPR009403">
    <property type="entry name" value="UPF0637"/>
</dbReference>
<dbReference type="InterPro" id="IPR053707">
    <property type="entry name" value="UPF0637_domain_sf"/>
</dbReference>
<dbReference type="Pfam" id="PF06335">
    <property type="entry name" value="DUF1054"/>
    <property type="match status" value="1"/>
</dbReference>
<dbReference type="PIRSF" id="PIRSF021332">
    <property type="entry name" value="DUF1054"/>
    <property type="match status" value="1"/>
</dbReference>
<dbReference type="SUPFAM" id="SSF142913">
    <property type="entry name" value="YktB/PF0168-like"/>
    <property type="match status" value="1"/>
</dbReference>